<feature type="chain" id="PRO_0000214143" description="Protein Syd">
    <location>
        <begin position="1"/>
        <end position="181"/>
    </location>
</feature>
<reference key="1">
    <citation type="journal article" date="2001" name="Nature">
        <title>Complete genome sequence of Salmonella enterica serovar Typhimurium LT2.</title>
        <authorList>
            <person name="McClelland M."/>
            <person name="Sanderson K.E."/>
            <person name="Spieth J."/>
            <person name="Clifton S.W."/>
            <person name="Latreille P."/>
            <person name="Courtney L."/>
            <person name="Porwollik S."/>
            <person name="Ali J."/>
            <person name="Dante M."/>
            <person name="Du F."/>
            <person name="Hou S."/>
            <person name="Layman D."/>
            <person name="Leonard S."/>
            <person name="Nguyen C."/>
            <person name="Scott K."/>
            <person name="Holmes A."/>
            <person name="Grewal N."/>
            <person name="Mulvaney E."/>
            <person name="Ryan E."/>
            <person name="Sun H."/>
            <person name="Florea L."/>
            <person name="Miller W."/>
            <person name="Stoneking T."/>
            <person name="Nhan M."/>
            <person name="Waterston R."/>
            <person name="Wilson R.K."/>
        </authorList>
    </citation>
    <scope>NUCLEOTIDE SEQUENCE [LARGE SCALE GENOMIC DNA]</scope>
    <source>
        <strain>LT2 / SGSC1412 / ATCC 700720</strain>
    </source>
</reference>
<evidence type="ECO:0000255" key="1">
    <source>
        <dbReference type="HAMAP-Rule" id="MF_01104"/>
    </source>
</evidence>
<proteinExistence type="inferred from homology"/>
<gene>
    <name evidence="1" type="primary">syd</name>
    <name type="ordered locus">STM2967</name>
</gene>
<accession>P60084</accession>
<accession>Q8XFC9</accession>
<comment type="function">
    <text evidence="1">Interacts with the SecY protein in vivo. May bind preferentially to an uncomplexed state of SecY, thus functioning either as a chelating agent for excess SecY in the cell or as a regulatory factor that negatively controls the translocase function.</text>
</comment>
<comment type="subcellular location">
    <subcellularLocation>
        <location evidence="1">Cell inner membrane</location>
        <topology evidence="1">Peripheral membrane protein</topology>
        <orientation evidence="1">Cytoplasmic side</orientation>
    </subcellularLocation>
    <text evidence="1">Loosely associated with the cytoplasmic side of the inner membrane, probably via SecY.</text>
</comment>
<comment type="similarity">
    <text evidence="1">Belongs to the Syd family.</text>
</comment>
<dbReference type="EMBL" id="AE006468">
    <property type="protein sequence ID" value="AAL21846.1"/>
    <property type="molecule type" value="Genomic_DNA"/>
</dbReference>
<dbReference type="RefSeq" id="NP_461887.1">
    <property type="nucleotide sequence ID" value="NC_003197.2"/>
</dbReference>
<dbReference type="RefSeq" id="WP_000343990.1">
    <property type="nucleotide sequence ID" value="NC_003197.2"/>
</dbReference>
<dbReference type="SMR" id="P60084"/>
<dbReference type="STRING" id="99287.STM2967"/>
<dbReference type="PaxDb" id="99287-STM2967"/>
<dbReference type="GeneID" id="1254490"/>
<dbReference type="KEGG" id="stm:STM2967"/>
<dbReference type="PATRIC" id="fig|99287.12.peg.3139"/>
<dbReference type="HOGENOM" id="CLU_121866_0_0_6"/>
<dbReference type="OMA" id="WIEIPGE"/>
<dbReference type="PhylomeDB" id="P60084"/>
<dbReference type="BioCyc" id="SENT99287:STM2967-MONOMER"/>
<dbReference type="Proteomes" id="UP000001014">
    <property type="component" value="Chromosome"/>
</dbReference>
<dbReference type="GO" id="GO:0009898">
    <property type="term" value="C:cytoplasmic side of plasma membrane"/>
    <property type="evidence" value="ECO:0007669"/>
    <property type="project" value="InterPro"/>
</dbReference>
<dbReference type="CDD" id="cd16323">
    <property type="entry name" value="Syd"/>
    <property type="match status" value="1"/>
</dbReference>
<dbReference type="Gene3D" id="3.40.1580.20">
    <property type="entry name" value="Syd protein"/>
    <property type="match status" value="1"/>
</dbReference>
<dbReference type="HAMAP" id="MF_01104">
    <property type="entry name" value="Syd"/>
    <property type="match status" value="1"/>
</dbReference>
<dbReference type="InterPro" id="IPR009948">
    <property type="entry name" value="Syd"/>
</dbReference>
<dbReference type="InterPro" id="IPR038228">
    <property type="entry name" value="Syd_sf"/>
</dbReference>
<dbReference type="NCBIfam" id="NF003439">
    <property type="entry name" value="PRK04968.1"/>
    <property type="match status" value="1"/>
</dbReference>
<dbReference type="Pfam" id="PF07348">
    <property type="entry name" value="Syd"/>
    <property type="match status" value="1"/>
</dbReference>
<sequence length="181" mass="20518">MDELTAQALKAFTTRYCDAWQEKHGSWPLSEELYGVPSPCIISSTRDAVYWQPQPFEGEENVNAVERAFDIMVQPALHAFYTTQFAGDMPAQFADEKLTLLQTWSQDDFRRVQENLIGHLVTQKRLKLPPTLFIATQENELEVISVCNLSGEVIKETLGTRNRTVLAATLAEFLTQLNPLL</sequence>
<name>SYDP_SALTY</name>
<organism>
    <name type="scientific">Salmonella typhimurium (strain LT2 / SGSC1412 / ATCC 700720)</name>
    <dbReference type="NCBI Taxonomy" id="99287"/>
    <lineage>
        <taxon>Bacteria</taxon>
        <taxon>Pseudomonadati</taxon>
        <taxon>Pseudomonadota</taxon>
        <taxon>Gammaproteobacteria</taxon>
        <taxon>Enterobacterales</taxon>
        <taxon>Enterobacteriaceae</taxon>
        <taxon>Salmonella</taxon>
    </lineage>
</organism>
<protein>
    <recommendedName>
        <fullName evidence="1">Protein Syd</fullName>
    </recommendedName>
</protein>
<keyword id="KW-0997">Cell inner membrane</keyword>
<keyword id="KW-1003">Cell membrane</keyword>
<keyword id="KW-0472">Membrane</keyword>
<keyword id="KW-1185">Reference proteome</keyword>